<evidence type="ECO:0000250" key="1"/>
<evidence type="ECO:0000305" key="2"/>
<organism>
    <name type="scientific">Homo sapiens</name>
    <name type="common">Human</name>
    <dbReference type="NCBI Taxonomy" id="9606"/>
    <lineage>
        <taxon>Eukaryota</taxon>
        <taxon>Metazoa</taxon>
        <taxon>Chordata</taxon>
        <taxon>Craniata</taxon>
        <taxon>Vertebrata</taxon>
        <taxon>Euteleostomi</taxon>
        <taxon>Mammalia</taxon>
        <taxon>Eutheria</taxon>
        <taxon>Euarchontoglires</taxon>
        <taxon>Primates</taxon>
        <taxon>Haplorrhini</taxon>
        <taxon>Catarrhini</taxon>
        <taxon>Hominidae</taxon>
        <taxon>Homo</taxon>
    </lineage>
</organism>
<reference key="1">
    <citation type="submission" date="2004-05" db="EMBL/GenBank/DDBJ databases">
        <title>Identification of eight novel genes from keratin associated protein gene cluster on human chromosome 21q22.11.</title>
        <authorList>
            <person name="Obayashi I."/>
            <person name="Shibuya K."/>
            <person name="Kudoh J."/>
            <person name="Shimizu N."/>
        </authorList>
    </citation>
    <scope>NUCLEOTIDE SEQUENCE [MRNA]</scope>
    <source>
        <tissue>Hair root</tissue>
    </source>
</reference>
<sequence length="52" mass="5737">MCYGYGCGCGSFCRLGYGCGYEGCRYGCGHRGCGDGCCCPSCYRRYRFTGFY</sequence>
<accession>Q3LHN2</accession>
<keyword id="KW-0416">Keratin</keyword>
<keyword id="KW-1185">Reference proteome</keyword>
<keyword id="KW-0677">Repeat</keyword>
<comment type="function">
    <text>In the hair cortex, hair keratin intermediate filaments are embedded in an interfilamentous matrix, consisting of hair keratin-associated proteins (KRTAP), which are essential for the formation of a rigid and resistant hair shaft through their extensive disulfide bond cross-linking with abundant cysteine residues of hair keratins. The matrix proteins include the high-sulfur and high-glycine-tyrosine keratins.</text>
</comment>
<comment type="subunit">
    <text evidence="1">Interacts with hair keratins.</text>
</comment>
<comment type="interaction">
    <interactant intactId="EBI-12196745">
        <id>Q3LHN2</id>
    </interactant>
    <interactant intactId="EBI-10173507">
        <id>Q6UY14-3</id>
        <label>ADAMTSL4</label>
    </interactant>
    <organismsDiffer>false</organismsDiffer>
    <experiments>3</experiments>
</comment>
<comment type="interaction">
    <interactant intactId="EBI-12196745">
        <id>Q3LHN2</id>
    </interactant>
    <interactant intactId="EBI-12224467">
        <id>Q9NYG5-2</id>
        <label>ANAPC11</label>
    </interactant>
    <organismsDiffer>false</organismsDiffer>
    <experiments>3</experiments>
</comment>
<comment type="interaction">
    <interactant intactId="EBI-12196745">
        <id>Q3LHN2</id>
    </interactant>
    <interactant intactId="EBI-11954292">
        <id>Q86V38</id>
        <label>ATN1</label>
    </interactant>
    <organismsDiffer>false</organismsDiffer>
    <experiments>3</experiments>
</comment>
<comment type="interaction">
    <interactant intactId="EBI-12196745">
        <id>Q3LHN2</id>
    </interactant>
    <interactant intactId="EBI-947551">
        <id>Q9H2X0</id>
        <label>CHRD</label>
    </interactant>
    <organismsDiffer>false</organismsDiffer>
    <experiments>3</experiments>
</comment>
<comment type="interaction">
    <interactant intactId="EBI-12196745">
        <id>Q3LHN2</id>
    </interactant>
    <interactant intactId="EBI-747133">
        <id>P27658</id>
        <label>COL8A1</label>
    </interactant>
    <organismsDiffer>false</organismsDiffer>
    <experiments>3</experiments>
</comment>
<comment type="interaction">
    <interactant intactId="EBI-12196745">
        <id>Q3LHN2</id>
    </interactant>
    <interactant intactId="EBI-10192698">
        <id>Q02930-3</id>
        <label>CREB5</label>
    </interactant>
    <organismsDiffer>false</organismsDiffer>
    <experiments>3</experiments>
</comment>
<comment type="interaction">
    <interactant intactId="EBI-12196745">
        <id>Q3LHN2</id>
    </interactant>
    <interactant intactId="EBI-3867333">
        <id>A8MQ03</id>
        <label>CYSRT1</label>
    </interactant>
    <organismsDiffer>false</organismsDiffer>
    <experiments>3</experiments>
</comment>
<comment type="interaction">
    <interactant intactId="EBI-12196745">
        <id>Q3LHN2</id>
    </interactant>
    <interactant intactId="EBI-536772">
        <id>Q12805</id>
        <label>EFEMP1</label>
    </interactant>
    <organismsDiffer>false</organismsDiffer>
    <experiments>3</experiments>
</comment>
<comment type="interaction">
    <interactant intactId="EBI-12196745">
        <id>Q3LHN2</id>
    </interactant>
    <interactant intactId="EBI-715318">
        <id>O95571</id>
        <label>ETHE1</label>
    </interactant>
    <organismsDiffer>false</organismsDiffer>
    <experiments>3</experiments>
</comment>
<comment type="interaction">
    <interactant intactId="EBI-12196745">
        <id>Q3LHN2</id>
    </interactant>
    <interactant intactId="EBI-11956479">
        <id>P23142-4</id>
        <label>FBLN1</label>
    </interactant>
    <organismsDiffer>false</organismsDiffer>
    <experiments>3</experiments>
</comment>
<comment type="interaction">
    <interactant intactId="EBI-12196745">
        <id>Q3LHN2</id>
    </interactant>
    <interactant intactId="EBI-17282008">
        <id>O60548</id>
        <label>FOXD2</label>
    </interactant>
    <organismsDiffer>false</organismsDiffer>
    <experiments>3</experiments>
</comment>
<comment type="interaction">
    <interactant intactId="EBI-12196745">
        <id>Q3LHN2</id>
    </interactant>
    <interactant intactId="EBI-1759806">
        <id>O75593</id>
        <label>FOXH1</label>
    </interactant>
    <organismsDiffer>false</organismsDiffer>
    <experiments>3</experiments>
</comment>
<comment type="interaction">
    <interactant intactId="EBI-12196745">
        <id>Q3LHN2</id>
    </interactant>
    <interactant intactId="EBI-11975289">
        <id>Q9Y223-2</id>
        <label>GNE</label>
    </interactant>
    <organismsDiffer>false</organismsDiffer>
    <experiments>5</experiments>
</comment>
<comment type="interaction">
    <interactant intactId="EBI-12196745">
        <id>Q3LHN2</id>
    </interactant>
    <interactant intactId="EBI-1752118">
        <id>P31273</id>
        <label>HOXC8</label>
    </interactant>
    <organismsDiffer>false</organismsDiffer>
    <experiments>3</experiments>
</comment>
<comment type="interaction">
    <interactant intactId="EBI-12196745">
        <id>Q3LHN2</id>
    </interactant>
    <interactant intactId="EBI-3918847">
        <id>Q9H2F3</id>
        <label>HSD3B7</label>
    </interactant>
    <organismsDiffer>false</organismsDiffer>
    <experiments>3</experiments>
</comment>
<comment type="interaction">
    <interactant intactId="EBI-12196745">
        <id>Q3LHN2</id>
    </interactant>
    <interactant intactId="EBI-10981970">
        <id>Q5T749</id>
        <label>KPRP</label>
    </interactant>
    <organismsDiffer>false</organismsDiffer>
    <experiments>3</experiments>
</comment>
<comment type="interaction">
    <interactant intactId="EBI-12196745">
        <id>Q3LHN2</id>
    </interactant>
    <interactant intactId="EBI-10176379">
        <id>P59991</id>
        <label>KRTAP12-2</label>
    </interactant>
    <organismsDiffer>false</organismsDiffer>
    <experiments>3</experiments>
</comment>
<comment type="interaction">
    <interactant intactId="EBI-12196745">
        <id>Q3LHN2</id>
    </interactant>
    <interactant intactId="EBI-10176396">
        <id>P60329</id>
        <label>KRTAP12-4</label>
    </interactant>
    <organismsDiffer>false</organismsDiffer>
    <experiments>3</experiments>
</comment>
<comment type="interaction">
    <interactant intactId="EBI-12196745">
        <id>Q3LHN2</id>
    </interactant>
    <interactant intactId="EBI-3957694">
        <id>Q9BYR6</id>
        <label>KRTAP3-3</label>
    </interactant>
    <organismsDiffer>false</organismsDiffer>
    <experiments>3</experiments>
</comment>
<comment type="interaction">
    <interactant intactId="EBI-12196745">
        <id>Q3LHN2</id>
    </interactant>
    <interactant intactId="EBI-739863">
        <id>Q9BQ66</id>
        <label>KRTAP4-12</label>
    </interactant>
    <organismsDiffer>false</organismsDiffer>
    <experiments>3</experiments>
</comment>
<comment type="interaction">
    <interactant intactId="EBI-12196745">
        <id>Q3LHN2</id>
    </interactant>
    <interactant intactId="EBI-22311199">
        <id>Q3LI67</id>
        <label>KRTAP6-3</label>
    </interactant>
    <organismsDiffer>false</organismsDiffer>
    <experiments>3</experiments>
</comment>
<comment type="interaction">
    <interactant intactId="EBI-12196745">
        <id>Q3LHN2</id>
    </interactant>
    <interactant intactId="EBI-1043191">
        <id>Q9BYQ3</id>
        <label>KRTAP9-3</label>
    </interactant>
    <organismsDiffer>false</organismsDiffer>
    <experiments>3</experiments>
</comment>
<comment type="interaction">
    <interactant intactId="EBI-12196745">
        <id>Q3LHN2</id>
    </interactant>
    <interactant intactId="EBI-10246750">
        <id>Q5TA82</id>
        <label>LCE2D</label>
    </interactant>
    <organismsDiffer>false</organismsDiffer>
    <experiments>3</experiments>
</comment>
<comment type="interaction">
    <interactant intactId="EBI-12196745">
        <id>Q3LHN2</id>
    </interactant>
    <interactant intactId="EBI-8025850">
        <id>O14770-4</id>
        <label>MEIS2</label>
    </interactant>
    <organismsDiffer>false</organismsDiffer>
    <experiments>5</experiments>
</comment>
<comment type="interaction">
    <interactant intactId="EBI-12196745">
        <id>Q3LHN2</id>
    </interactant>
    <interactant intactId="EBI-2340269">
        <id>Q13064</id>
        <label>MKRN3</label>
    </interactant>
    <organismsDiffer>false</organismsDiffer>
    <experiments>3</experiments>
</comment>
<comment type="interaction">
    <interactant intactId="EBI-12196745">
        <id>Q3LHN2</id>
    </interactant>
    <interactant intactId="EBI-741158">
        <id>Q96HA8</id>
        <label>NTAQ1</label>
    </interactant>
    <organismsDiffer>false</organismsDiffer>
    <experiments>5</experiments>
</comment>
<comment type="interaction">
    <interactant intactId="EBI-12196745">
        <id>Q3LHN2</id>
    </interactant>
    <interactant intactId="EBI-10225049">
        <id>Q7RTU3</id>
        <label>OLIG3</label>
    </interactant>
    <organismsDiffer>false</organismsDiffer>
    <experiments>3</experiments>
</comment>
<comment type="interaction">
    <interactant intactId="EBI-12196745">
        <id>Q3LHN2</id>
    </interactant>
    <interactant intactId="EBI-740446">
        <id>P32242</id>
        <label>OTX1</label>
    </interactant>
    <organismsDiffer>false</organismsDiffer>
    <experiments>5</experiments>
</comment>
<comment type="interaction">
    <interactant intactId="EBI-12196745">
        <id>Q3LHN2</id>
    </interactant>
    <interactant intactId="EBI-11956269">
        <id>Q92824-2</id>
        <label>PCSK5</label>
    </interactant>
    <organismsDiffer>false</organismsDiffer>
    <experiments>3</experiments>
</comment>
<comment type="interaction">
    <interactant intactId="EBI-12196745">
        <id>Q3LHN2</id>
    </interactant>
    <interactant intactId="EBI-2908273">
        <id>Q96S52</id>
        <label>PIGS</label>
    </interactant>
    <organismsDiffer>false</organismsDiffer>
    <experiments>3</experiments>
</comment>
<comment type="interaction">
    <interactant intactId="EBI-12196745">
        <id>Q3LHN2</id>
    </interactant>
    <interactant intactId="EBI-17236143">
        <id>Q12837</id>
        <label>POU4F2</label>
    </interactant>
    <organismsDiffer>false</organismsDiffer>
    <experiments>3</experiments>
</comment>
<comment type="interaction">
    <interactant intactId="EBI-12196745">
        <id>Q3LHN2</id>
    </interactant>
    <interactant intactId="EBI-12006870">
        <id>Q9H310-3</id>
        <label>RHBG</label>
    </interactant>
    <organismsDiffer>false</organismsDiffer>
    <experiments>3</experiments>
</comment>
<comment type="interaction">
    <interactant intactId="EBI-12196745">
        <id>Q3LHN2</id>
    </interactant>
    <interactant intactId="EBI-7244836">
        <id>Q9UP95</id>
        <label>SLC12A4</label>
    </interactant>
    <organismsDiffer>false</organismsDiffer>
    <experiments>3</experiments>
</comment>
<comment type="interaction">
    <interactant intactId="EBI-12196745">
        <id>Q3LHN2</id>
    </interactant>
    <interactant intactId="EBI-12179023">
        <id>Q8IY34</id>
        <label>SLC15A3</label>
    </interactant>
    <organismsDiffer>false</organismsDiffer>
    <experiments>3</experiments>
</comment>
<comment type="interaction">
    <interactant intactId="EBI-12196745">
        <id>Q3LHN2</id>
    </interactant>
    <interactant intactId="EBI-355653">
        <id>Q92922</id>
        <label>SMARCC1</label>
    </interactant>
    <organismsDiffer>false</organismsDiffer>
    <experiments>3</experiments>
</comment>
<comment type="interaction">
    <interactant intactId="EBI-12196745">
        <id>Q3LHN2</id>
    </interactant>
    <interactant intactId="EBI-766589">
        <id>P09234</id>
        <label>SNRPC</label>
    </interactant>
    <organismsDiffer>false</organismsDiffer>
    <experiments>3</experiments>
</comment>
<comment type="interaction">
    <interactant intactId="EBI-12196745">
        <id>Q3LHN2</id>
    </interactant>
    <interactant intactId="EBI-11959123">
        <id>Q99932-2</id>
        <label>SPAG8</label>
    </interactant>
    <organismsDiffer>false</organismsDiffer>
    <experiments>3</experiments>
</comment>
<comment type="interaction">
    <interactant intactId="EBI-12196745">
        <id>Q3LHN2</id>
    </interactant>
    <interactant intactId="EBI-750487">
        <id>Q8WW24</id>
        <label>TEKT4</label>
    </interactant>
    <organismsDiffer>false</organismsDiffer>
    <experiments>3</experiments>
</comment>
<comment type="interaction">
    <interactant intactId="EBI-12196745">
        <id>Q3LHN2</id>
    </interactant>
    <interactant intactId="EBI-744726">
        <id>Q8NEK8</id>
        <label>TENT5D</label>
    </interactant>
    <organismsDiffer>false</organismsDiffer>
    <experiments>3</experiments>
</comment>
<comment type="interaction">
    <interactant intactId="EBI-12196745">
        <id>Q3LHN2</id>
    </interactant>
    <interactant intactId="EBI-11952651">
        <id>Q7Z6R9</id>
        <label>TFAP2D</label>
    </interactant>
    <organismsDiffer>false</organismsDiffer>
    <experiments>3</experiments>
</comment>
<comment type="interaction">
    <interactant intactId="EBI-12196745">
        <id>Q3LHN2</id>
    </interactant>
    <interactant intactId="EBI-10191303">
        <id>O95231</id>
        <label>VENTX</label>
    </interactant>
    <organismsDiffer>false</organismsDiffer>
    <experiments>3</experiments>
</comment>
<comment type="interaction">
    <interactant intactId="EBI-12196745">
        <id>Q3LHN2</id>
    </interactant>
    <interactant intactId="EBI-11957216">
        <id>A8MV65-2</id>
        <label>VGLL3</label>
    </interactant>
    <organismsDiffer>false</organismsDiffer>
    <experiments>5</experiments>
</comment>
<comment type="interaction">
    <interactant intactId="EBI-12196745">
        <id>Q3LHN2</id>
    </interactant>
    <interactant intactId="EBI-11747707">
        <id>B2RUY7</id>
        <label>VWC2L</label>
    </interactant>
    <organismsDiffer>false</organismsDiffer>
    <experiments>3</experiments>
</comment>
<comment type="interaction">
    <interactant intactId="EBI-12196745">
        <id>Q3LHN2</id>
    </interactant>
    <interactant intactId="EBI-11963196">
        <id>Q15915</id>
        <label>ZIC1</label>
    </interactant>
    <organismsDiffer>false</organismsDiffer>
    <experiments>3</experiments>
</comment>
<comment type="similarity">
    <text evidence="2">Belongs to the KRTAP type 19 family.</text>
</comment>
<name>KR192_HUMAN</name>
<protein>
    <recommendedName>
        <fullName>Keratin-associated protein 19-2</fullName>
    </recommendedName>
</protein>
<gene>
    <name type="primary">KRTAP19-2</name>
    <name type="synonym">KAP19.2</name>
</gene>
<proteinExistence type="evidence at protein level"/>
<dbReference type="EMBL" id="AB180041">
    <property type="protein sequence ID" value="BAE46380.1"/>
    <property type="molecule type" value="mRNA"/>
</dbReference>
<dbReference type="CCDS" id="CCDS13595.1"/>
<dbReference type="RefSeq" id="NP_853639.1">
    <property type="nucleotide sequence ID" value="NM_181608.2"/>
</dbReference>
<dbReference type="BioGRID" id="130652">
    <property type="interactions" value="47"/>
</dbReference>
<dbReference type="FunCoup" id="Q3LHN2">
    <property type="interactions" value="14"/>
</dbReference>
<dbReference type="IntAct" id="Q3LHN2">
    <property type="interactions" value="44"/>
</dbReference>
<dbReference type="STRING" id="9606.ENSP00000335660"/>
<dbReference type="iPTMnet" id="Q3LHN2"/>
<dbReference type="PhosphoSitePlus" id="Q3LHN2"/>
<dbReference type="BioMuta" id="KRTAP19-2"/>
<dbReference type="DMDM" id="88909169"/>
<dbReference type="PaxDb" id="9606-ENSP00000335660"/>
<dbReference type="DNASU" id="337969"/>
<dbReference type="Ensembl" id="ENST00000334055.5">
    <property type="protein sequence ID" value="ENSP00000335660.3"/>
    <property type="gene ID" value="ENSG00000186965.5"/>
</dbReference>
<dbReference type="GeneID" id="337969"/>
<dbReference type="KEGG" id="hsa:337969"/>
<dbReference type="MANE-Select" id="ENST00000334055.5">
    <property type="protein sequence ID" value="ENSP00000335660.3"/>
    <property type="RefSeq nucleotide sequence ID" value="NM_181608.2"/>
    <property type="RefSeq protein sequence ID" value="NP_853639.1"/>
</dbReference>
<dbReference type="UCSC" id="uc011acy.3">
    <property type="organism name" value="human"/>
</dbReference>
<dbReference type="AGR" id="HGNC:18937"/>
<dbReference type="CTD" id="337969"/>
<dbReference type="GeneCards" id="KRTAP19-2"/>
<dbReference type="HGNC" id="HGNC:18937">
    <property type="gene designation" value="KRTAP19-2"/>
</dbReference>
<dbReference type="HPA" id="ENSG00000186965">
    <property type="expression patterns" value="Not detected"/>
</dbReference>
<dbReference type="neXtProt" id="NX_Q3LHN2"/>
<dbReference type="PharmGKB" id="PA134969992"/>
<dbReference type="VEuPathDB" id="HostDB:ENSG00000186965"/>
<dbReference type="eggNOG" id="ENOG502TKV3">
    <property type="taxonomic scope" value="Eukaryota"/>
</dbReference>
<dbReference type="GeneTree" id="ENSGT00860000134229"/>
<dbReference type="HOGENOM" id="CLU_184630_0_0_1"/>
<dbReference type="InParanoid" id="Q3LHN2"/>
<dbReference type="OMA" id="CCPSCYR"/>
<dbReference type="PAN-GO" id="Q3LHN2">
    <property type="GO annotations" value="0 GO annotations based on evolutionary models"/>
</dbReference>
<dbReference type="PathwayCommons" id="Q3LHN2"/>
<dbReference type="Reactome" id="R-HSA-6805567">
    <property type="pathway name" value="Keratinization"/>
</dbReference>
<dbReference type="SignaLink" id="Q3LHN2"/>
<dbReference type="BioGRID-ORCS" id="337969">
    <property type="hits" value="15 hits in 1062 CRISPR screens"/>
</dbReference>
<dbReference type="GenomeRNAi" id="337969"/>
<dbReference type="Pharos" id="Q3LHN2">
    <property type="development level" value="Tdark"/>
</dbReference>
<dbReference type="PRO" id="PR:Q3LHN2"/>
<dbReference type="Proteomes" id="UP000005640">
    <property type="component" value="Chromosome 21"/>
</dbReference>
<dbReference type="RNAct" id="Q3LHN2">
    <property type="molecule type" value="protein"/>
</dbReference>
<dbReference type="Bgee" id="ENSG00000186965">
    <property type="expression patterns" value="Expressed in granulocyte and 12 other cell types or tissues"/>
</dbReference>
<dbReference type="GO" id="GO:0005829">
    <property type="term" value="C:cytosol"/>
    <property type="evidence" value="ECO:0000304"/>
    <property type="project" value="Reactome"/>
</dbReference>
<dbReference type="GO" id="GO:0005882">
    <property type="term" value="C:intermediate filament"/>
    <property type="evidence" value="ECO:0007669"/>
    <property type="project" value="UniProtKB-KW"/>
</dbReference>
<dbReference type="InterPro" id="IPR021743">
    <property type="entry name" value="KRTAP_type8/19/20/21/22"/>
</dbReference>
<dbReference type="Pfam" id="PF11759">
    <property type="entry name" value="KRTAP"/>
    <property type="match status" value="1"/>
</dbReference>
<feature type="chain" id="PRO_0000223904" description="Keratin-associated protein 19-2">
    <location>
        <begin position="1"/>
        <end position="52"/>
    </location>
</feature>
<feature type="sequence variant" id="VAR_053473" description="In dbSNP:rs7280687.">
    <original>Y</original>
    <variation>H</variation>
    <location>
        <position position="5"/>
    </location>
</feature>
<feature type="sequence variant" id="VAR_053474" description="In dbSNP:rs8131735.">
    <original>G</original>
    <variation>C</variation>
    <location>
        <position position="32"/>
    </location>
</feature>